<sequence length="58" mass="6040">MLGWTLVFLVVAVIAGLLGFTGIAGAAAGIAKIIFLIFIVLLVISLLVNAFRGKSPRL</sequence>
<comment type="subcellular location">
    <subcellularLocation>
        <location evidence="1">Cell membrane</location>
        <topology evidence="1">Multi-pass membrane protein</topology>
    </subcellularLocation>
</comment>
<comment type="similarity">
    <text evidence="1">Belongs to the UPF0391 family.</text>
</comment>
<name>Y1421_SHEB5</name>
<dbReference type="EMBL" id="CP000563">
    <property type="protein sequence ID" value="ABN60939.1"/>
    <property type="molecule type" value="Genomic_DNA"/>
</dbReference>
<dbReference type="RefSeq" id="WP_011846326.1">
    <property type="nucleotide sequence ID" value="NC_009052.1"/>
</dbReference>
<dbReference type="STRING" id="325240.Sbal_1421"/>
<dbReference type="KEGG" id="sbl:Sbal_1421"/>
<dbReference type="HOGENOM" id="CLU_187346_1_0_6"/>
<dbReference type="Proteomes" id="UP000001557">
    <property type="component" value="Chromosome"/>
</dbReference>
<dbReference type="GO" id="GO:0005886">
    <property type="term" value="C:plasma membrane"/>
    <property type="evidence" value="ECO:0007669"/>
    <property type="project" value="UniProtKB-SubCell"/>
</dbReference>
<dbReference type="HAMAP" id="MF_01361">
    <property type="entry name" value="UPF0391"/>
    <property type="match status" value="1"/>
</dbReference>
<dbReference type="InterPro" id="IPR009760">
    <property type="entry name" value="DUF1328"/>
</dbReference>
<dbReference type="NCBIfam" id="NF010228">
    <property type="entry name" value="PRK13682.1-3"/>
    <property type="match status" value="1"/>
</dbReference>
<dbReference type="NCBIfam" id="NF010229">
    <property type="entry name" value="PRK13682.1-4"/>
    <property type="match status" value="1"/>
</dbReference>
<dbReference type="Pfam" id="PF07043">
    <property type="entry name" value="DUF1328"/>
    <property type="match status" value="1"/>
</dbReference>
<dbReference type="PIRSF" id="PIRSF036466">
    <property type="entry name" value="UCP036466"/>
    <property type="match status" value="1"/>
</dbReference>
<keyword id="KW-1003">Cell membrane</keyword>
<keyword id="KW-0472">Membrane</keyword>
<keyword id="KW-1185">Reference proteome</keyword>
<keyword id="KW-0812">Transmembrane</keyword>
<keyword id="KW-1133">Transmembrane helix</keyword>
<protein>
    <recommendedName>
        <fullName evidence="1">UPF0391 membrane protein Sbal_1421</fullName>
    </recommendedName>
</protein>
<reference key="1">
    <citation type="submission" date="2007-02" db="EMBL/GenBank/DDBJ databases">
        <title>Complete sequence of chromosome of Shewanella baltica OS155.</title>
        <authorList>
            <consortium name="US DOE Joint Genome Institute"/>
            <person name="Copeland A."/>
            <person name="Lucas S."/>
            <person name="Lapidus A."/>
            <person name="Barry K."/>
            <person name="Detter J.C."/>
            <person name="Glavina del Rio T."/>
            <person name="Hammon N."/>
            <person name="Israni S."/>
            <person name="Dalin E."/>
            <person name="Tice H."/>
            <person name="Pitluck S."/>
            <person name="Sims D.R."/>
            <person name="Brettin T."/>
            <person name="Bruce D."/>
            <person name="Han C."/>
            <person name="Tapia R."/>
            <person name="Brainard J."/>
            <person name="Schmutz J."/>
            <person name="Larimer F."/>
            <person name="Land M."/>
            <person name="Hauser L."/>
            <person name="Kyrpides N."/>
            <person name="Mikhailova N."/>
            <person name="Brettar I."/>
            <person name="Klappenbach J."/>
            <person name="Konstantinidis K."/>
            <person name="Rodrigues J."/>
            <person name="Tiedje J."/>
            <person name="Richardson P."/>
        </authorList>
    </citation>
    <scope>NUCLEOTIDE SEQUENCE [LARGE SCALE GENOMIC DNA]</scope>
    <source>
        <strain>OS155 / ATCC BAA-1091</strain>
    </source>
</reference>
<gene>
    <name type="ordered locus">Sbal_1421</name>
</gene>
<feature type="chain" id="PRO_0000314228" description="UPF0391 membrane protein Sbal_1421">
    <location>
        <begin position="1"/>
        <end position="58"/>
    </location>
</feature>
<feature type="transmembrane region" description="Helical" evidence="1">
    <location>
        <begin position="6"/>
        <end position="26"/>
    </location>
</feature>
<feature type="transmembrane region" description="Helical" evidence="1">
    <location>
        <begin position="28"/>
        <end position="48"/>
    </location>
</feature>
<organism>
    <name type="scientific">Shewanella baltica (strain OS155 / ATCC BAA-1091)</name>
    <dbReference type="NCBI Taxonomy" id="325240"/>
    <lineage>
        <taxon>Bacteria</taxon>
        <taxon>Pseudomonadati</taxon>
        <taxon>Pseudomonadota</taxon>
        <taxon>Gammaproteobacteria</taxon>
        <taxon>Alteromonadales</taxon>
        <taxon>Shewanellaceae</taxon>
        <taxon>Shewanella</taxon>
    </lineage>
</organism>
<evidence type="ECO:0000255" key="1">
    <source>
        <dbReference type="HAMAP-Rule" id="MF_01361"/>
    </source>
</evidence>
<proteinExistence type="inferred from homology"/>
<accession>A3D2H6</accession>